<reference key="1">
    <citation type="journal article" date="2005" name="Proc. Natl. Acad. Sci. U.S.A.">
        <title>Comparison of the complete genome sequences of Pseudomonas syringae pv. syringae B728a and pv. tomato DC3000.</title>
        <authorList>
            <person name="Feil H."/>
            <person name="Feil W.S."/>
            <person name="Chain P."/>
            <person name="Larimer F."/>
            <person name="Dibartolo G."/>
            <person name="Copeland A."/>
            <person name="Lykidis A."/>
            <person name="Trong S."/>
            <person name="Nolan M."/>
            <person name="Goltsman E."/>
            <person name="Thiel J."/>
            <person name="Malfatti S."/>
            <person name="Loper J.E."/>
            <person name="Lapidus A."/>
            <person name="Detter J.C."/>
            <person name="Land M."/>
            <person name="Richardson P.M."/>
            <person name="Kyrpides N.C."/>
            <person name="Ivanova N."/>
            <person name="Lindow S.E."/>
        </authorList>
    </citation>
    <scope>NUCLEOTIDE SEQUENCE [LARGE SCALE GENOMIC DNA]</scope>
    <source>
        <strain>B728a</strain>
    </source>
</reference>
<evidence type="ECO:0000255" key="1">
    <source>
        <dbReference type="HAMAP-Rule" id="MF_00005"/>
    </source>
</evidence>
<comment type="catalytic activity">
    <reaction evidence="1">
        <text>L-citrulline + L-aspartate + ATP = 2-(N(omega)-L-arginino)succinate + AMP + diphosphate + H(+)</text>
        <dbReference type="Rhea" id="RHEA:10932"/>
        <dbReference type="ChEBI" id="CHEBI:15378"/>
        <dbReference type="ChEBI" id="CHEBI:29991"/>
        <dbReference type="ChEBI" id="CHEBI:30616"/>
        <dbReference type="ChEBI" id="CHEBI:33019"/>
        <dbReference type="ChEBI" id="CHEBI:57472"/>
        <dbReference type="ChEBI" id="CHEBI:57743"/>
        <dbReference type="ChEBI" id="CHEBI:456215"/>
        <dbReference type="EC" id="6.3.4.5"/>
    </reaction>
</comment>
<comment type="pathway">
    <text evidence="1">Amino-acid biosynthesis; L-arginine biosynthesis; L-arginine from L-ornithine and carbamoyl phosphate: step 2/3.</text>
</comment>
<comment type="subunit">
    <text evidence="1">Homotetramer.</text>
</comment>
<comment type="subcellular location">
    <subcellularLocation>
        <location evidence="1">Cytoplasm</location>
    </subcellularLocation>
</comment>
<comment type="similarity">
    <text evidence="1">Belongs to the argininosuccinate synthase family. Type 1 subfamily.</text>
</comment>
<name>ASSY_PSEU2</name>
<keyword id="KW-0028">Amino-acid biosynthesis</keyword>
<keyword id="KW-0055">Arginine biosynthesis</keyword>
<keyword id="KW-0067">ATP-binding</keyword>
<keyword id="KW-0963">Cytoplasm</keyword>
<keyword id="KW-0436">Ligase</keyword>
<keyword id="KW-0547">Nucleotide-binding</keyword>
<dbReference type="EC" id="6.3.4.5" evidence="1"/>
<dbReference type="EMBL" id="CP000075">
    <property type="protein sequence ID" value="AAY38922.1"/>
    <property type="molecule type" value="Genomic_DNA"/>
</dbReference>
<dbReference type="RefSeq" id="WP_003363593.1">
    <property type="nucleotide sequence ID" value="NC_007005.1"/>
</dbReference>
<dbReference type="RefSeq" id="YP_236960.1">
    <property type="nucleotide sequence ID" value="NC_007005.1"/>
</dbReference>
<dbReference type="SMR" id="Q4ZPK0"/>
<dbReference type="STRING" id="205918.Psyr_3892"/>
<dbReference type="KEGG" id="psb:Psyr_3892"/>
<dbReference type="PATRIC" id="fig|205918.7.peg.4003"/>
<dbReference type="eggNOG" id="COG0137">
    <property type="taxonomic scope" value="Bacteria"/>
</dbReference>
<dbReference type="HOGENOM" id="CLU_032784_4_2_6"/>
<dbReference type="OrthoDB" id="9801641at2"/>
<dbReference type="UniPathway" id="UPA00068">
    <property type="reaction ID" value="UER00113"/>
</dbReference>
<dbReference type="Proteomes" id="UP000000426">
    <property type="component" value="Chromosome"/>
</dbReference>
<dbReference type="GO" id="GO:0005737">
    <property type="term" value="C:cytoplasm"/>
    <property type="evidence" value="ECO:0007669"/>
    <property type="project" value="UniProtKB-SubCell"/>
</dbReference>
<dbReference type="GO" id="GO:0004055">
    <property type="term" value="F:argininosuccinate synthase activity"/>
    <property type="evidence" value="ECO:0007669"/>
    <property type="project" value="UniProtKB-UniRule"/>
</dbReference>
<dbReference type="GO" id="GO:0005524">
    <property type="term" value="F:ATP binding"/>
    <property type="evidence" value="ECO:0007669"/>
    <property type="project" value="UniProtKB-UniRule"/>
</dbReference>
<dbReference type="GO" id="GO:0000053">
    <property type="term" value="P:argininosuccinate metabolic process"/>
    <property type="evidence" value="ECO:0007669"/>
    <property type="project" value="TreeGrafter"/>
</dbReference>
<dbReference type="GO" id="GO:0006526">
    <property type="term" value="P:L-arginine biosynthetic process"/>
    <property type="evidence" value="ECO:0007669"/>
    <property type="project" value="UniProtKB-UniRule"/>
</dbReference>
<dbReference type="GO" id="GO:0000050">
    <property type="term" value="P:urea cycle"/>
    <property type="evidence" value="ECO:0007669"/>
    <property type="project" value="TreeGrafter"/>
</dbReference>
<dbReference type="CDD" id="cd01999">
    <property type="entry name" value="ASS"/>
    <property type="match status" value="1"/>
</dbReference>
<dbReference type="FunFam" id="1.20.5.470:FF:000001">
    <property type="entry name" value="Argininosuccinate synthase"/>
    <property type="match status" value="1"/>
</dbReference>
<dbReference type="FunFam" id="3.40.50.620:FF:000019">
    <property type="entry name" value="Argininosuccinate synthase"/>
    <property type="match status" value="1"/>
</dbReference>
<dbReference type="FunFam" id="3.90.1260.10:FF:000001">
    <property type="entry name" value="Argininosuccinate synthase"/>
    <property type="match status" value="1"/>
</dbReference>
<dbReference type="Gene3D" id="3.90.1260.10">
    <property type="entry name" value="Argininosuccinate synthetase, chain A, domain 2"/>
    <property type="match status" value="1"/>
</dbReference>
<dbReference type="Gene3D" id="3.40.50.620">
    <property type="entry name" value="HUPs"/>
    <property type="match status" value="1"/>
</dbReference>
<dbReference type="Gene3D" id="1.20.5.470">
    <property type="entry name" value="Single helix bin"/>
    <property type="match status" value="1"/>
</dbReference>
<dbReference type="HAMAP" id="MF_00005">
    <property type="entry name" value="Arg_succ_synth_type1"/>
    <property type="match status" value="1"/>
</dbReference>
<dbReference type="InterPro" id="IPR048268">
    <property type="entry name" value="Arginosuc_syn_C"/>
</dbReference>
<dbReference type="InterPro" id="IPR048267">
    <property type="entry name" value="Arginosuc_syn_N"/>
</dbReference>
<dbReference type="InterPro" id="IPR001518">
    <property type="entry name" value="Arginosuc_synth"/>
</dbReference>
<dbReference type="InterPro" id="IPR018223">
    <property type="entry name" value="Arginosuc_synth_CS"/>
</dbReference>
<dbReference type="InterPro" id="IPR023434">
    <property type="entry name" value="Arginosuc_synth_type_1_subfam"/>
</dbReference>
<dbReference type="InterPro" id="IPR024074">
    <property type="entry name" value="AS_cat/multimer_dom_body"/>
</dbReference>
<dbReference type="InterPro" id="IPR014729">
    <property type="entry name" value="Rossmann-like_a/b/a_fold"/>
</dbReference>
<dbReference type="NCBIfam" id="TIGR00032">
    <property type="entry name" value="argG"/>
    <property type="match status" value="1"/>
</dbReference>
<dbReference type="NCBIfam" id="NF001770">
    <property type="entry name" value="PRK00509.1"/>
    <property type="match status" value="1"/>
</dbReference>
<dbReference type="PANTHER" id="PTHR11587">
    <property type="entry name" value="ARGININOSUCCINATE SYNTHASE"/>
    <property type="match status" value="1"/>
</dbReference>
<dbReference type="PANTHER" id="PTHR11587:SF2">
    <property type="entry name" value="ARGININOSUCCINATE SYNTHASE"/>
    <property type="match status" value="1"/>
</dbReference>
<dbReference type="Pfam" id="PF20979">
    <property type="entry name" value="Arginosuc_syn_C"/>
    <property type="match status" value="1"/>
</dbReference>
<dbReference type="Pfam" id="PF00764">
    <property type="entry name" value="Arginosuc_synth"/>
    <property type="match status" value="1"/>
</dbReference>
<dbReference type="SUPFAM" id="SSF52402">
    <property type="entry name" value="Adenine nucleotide alpha hydrolases-like"/>
    <property type="match status" value="1"/>
</dbReference>
<dbReference type="SUPFAM" id="SSF69864">
    <property type="entry name" value="Argininosuccinate synthetase, C-terminal domain"/>
    <property type="match status" value="1"/>
</dbReference>
<dbReference type="PROSITE" id="PS00564">
    <property type="entry name" value="ARGININOSUCCIN_SYN_1"/>
    <property type="match status" value="1"/>
</dbReference>
<dbReference type="PROSITE" id="PS00565">
    <property type="entry name" value="ARGININOSUCCIN_SYN_2"/>
    <property type="match status" value="1"/>
</dbReference>
<proteinExistence type="inferred from homology"/>
<gene>
    <name evidence="1" type="primary">argG</name>
    <name type="ordered locus">Psyr_3892</name>
</gene>
<feature type="chain" id="PRO_0000263957" description="Argininosuccinate synthase">
    <location>
        <begin position="1"/>
        <end position="405"/>
    </location>
</feature>
<feature type="binding site" evidence="1">
    <location>
        <begin position="10"/>
        <end position="18"/>
    </location>
    <ligand>
        <name>ATP</name>
        <dbReference type="ChEBI" id="CHEBI:30616"/>
    </ligand>
</feature>
<feature type="binding site" evidence="1">
    <location>
        <position position="37"/>
    </location>
    <ligand>
        <name>ATP</name>
        <dbReference type="ChEBI" id="CHEBI:30616"/>
    </ligand>
</feature>
<feature type="binding site" evidence="1">
    <location>
        <position position="88"/>
    </location>
    <ligand>
        <name>L-citrulline</name>
        <dbReference type="ChEBI" id="CHEBI:57743"/>
    </ligand>
</feature>
<feature type="binding site" evidence="1">
    <location>
        <position position="93"/>
    </location>
    <ligand>
        <name>L-citrulline</name>
        <dbReference type="ChEBI" id="CHEBI:57743"/>
    </ligand>
</feature>
<feature type="binding site" evidence="1">
    <location>
        <position position="118"/>
    </location>
    <ligand>
        <name>ATP</name>
        <dbReference type="ChEBI" id="CHEBI:30616"/>
    </ligand>
</feature>
<feature type="binding site" evidence="1">
    <location>
        <position position="120"/>
    </location>
    <ligand>
        <name>L-aspartate</name>
        <dbReference type="ChEBI" id="CHEBI:29991"/>
    </ligand>
</feature>
<feature type="binding site" evidence="1">
    <location>
        <position position="124"/>
    </location>
    <ligand>
        <name>L-aspartate</name>
        <dbReference type="ChEBI" id="CHEBI:29991"/>
    </ligand>
</feature>
<feature type="binding site" evidence="1">
    <location>
        <position position="124"/>
    </location>
    <ligand>
        <name>L-citrulline</name>
        <dbReference type="ChEBI" id="CHEBI:57743"/>
    </ligand>
</feature>
<feature type="binding site" evidence="1">
    <location>
        <position position="125"/>
    </location>
    <ligand>
        <name>L-aspartate</name>
        <dbReference type="ChEBI" id="CHEBI:29991"/>
    </ligand>
</feature>
<feature type="binding site" evidence="1">
    <location>
        <position position="128"/>
    </location>
    <ligand>
        <name>L-citrulline</name>
        <dbReference type="ChEBI" id="CHEBI:57743"/>
    </ligand>
</feature>
<feature type="binding site" evidence="1">
    <location>
        <position position="179"/>
    </location>
    <ligand>
        <name>L-citrulline</name>
        <dbReference type="ChEBI" id="CHEBI:57743"/>
    </ligand>
</feature>
<feature type="binding site" evidence="1">
    <location>
        <position position="188"/>
    </location>
    <ligand>
        <name>L-citrulline</name>
        <dbReference type="ChEBI" id="CHEBI:57743"/>
    </ligand>
</feature>
<feature type="binding site" evidence="1">
    <location>
        <position position="264"/>
    </location>
    <ligand>
        <name>L-citrulline</name>
        <dbReference type="ChEBI" id="CHEBI:57743"/>
    </ligand>
</feature>
<feature type="binding site" evidence="1">
    <location>
        <position position="276"/>
    </location>
    <ligand>
        <name>L-citrulline</name>
        <dbReference type="ChEBI" id="CHEBI:57743"/>
    </ligand>
</feature>
<organism>
    <name type="scientific">Pseudomonas syringae pv. syringae (strain B728a)</name>
    <dbReference type="NCBI Taxonomy" id="205918"/>
    <lineage>
        <taxon>Bacteria</taxon>
        <taxon>Pseudomonadati</taxon>
        <taxon>Pseudomonadota</taxon>
        <taxon>Gammaproteobacteria</taxon>
        <taxon>Pseudomonadales</taxon>
        <taxon>Pseudomonadaceae</taxon>
        <taxon>Pseudomonas</taxon>
        <taxon>Pseudomonas syringae</taxon>
    </lineage>
</organism>
<sequence length="405" mass="45398">MADVNKVVLAYSGGLDTSVILKWLQDTYNCEVVTFTADLGQGEEVEPARAKAQAMGVKEIYIDDLREEFVRDFVFPMFRANTVYEGEYLLGTSIARPLIAKRLIEIANETGADAISHGATGKGNDQVRFELGAYALKPGVKVIAPWREWDLLSREKLMDYAEKHNIPIERHGKKKSPYSMDANLLHISYEGGVLEDTWTEHEEDMWRWTKSPEDAPNVATYLELTYRNGDIVALDGVEMTPATVLATLNRIGGENGIGRLDIVENRYVGMKSRGCYETPGGTIMLRAHRAIESITLDREVAHLKDELMAKYASLIYTGYWWSPERLMLQQMIDASQVHVNGVVRLKLYKGNVIVTGRKSDDSLFDANIATFEDDAGAYDQADAAGFIKLNALRMRIAANKGRKLF</sequence>
<protein>
    <recommendedName>
        <fullName evidence="1">Argininosuccinate synthase</fullName>
        <ecNumber evidence="1">6.3.4.5</ecNumber>
    </recommendedName>
    <alternativeName>
        <fullName evidence="1">Citrulline--aspartate ligase</fullName>
    </alternativeName>
</protein>
<accession>Q4ZPK0</accession>